<accession>C1CUC1</accession>
<evidence type="ECO:0000255" key="1">
    <source>
        <dbReference type="HAMAP-Rule" id="MF_00503"/>
    </source>
</evidence>
<evidence type="ECO:0000305" key="2"/>
<proteinExistence type="inferred from homology"/>
<name>RL9_STRZT</name>
<comment type="function">
    <text evidence="1">Binds to the 23S rRNA.</text>
</comment>
<comment type="similarity">
    <text evidence="1">Belongs to the bacterial ribosomal protein bL9 family.</text>
</comment>
<feature type="chain" id="PRO_1000196270" description="Large ribosomal subunit protein bL9">
    <location>
        <begin position="1"/>
        <end position="150"/>
    </location>
</feature>
<reference key="1">
    <citation type="journal article" date="2010" name="Genome Biol.">
        <title>Structure and dynamics of the pan-genome of Streptococcus pneumoniae and closely related species.</title>
        <authorList>
            <person name="Donati C."/>
            <person name="Hiller N.L."/>
            <person name="Tettelin H."/>
            <person name="Muzzi A."/>
            <person name="Croucher N.J."/>
            <person name="Angiuoli S.V."/>
            <person name="Oggioni M."/>
            <person name="Dunning Hotopp J.C."/>
            <person name="Hu F.Z."/>
            <person name="Riley D.R."/>
            <person name="Covacci A."/>
            <person name="Mitchell T.J."/>
            <person name="Bentley S.D."/>
            <person name="Kilian M."/>
            <person name="Ehrlich G.D."/>
            <person name="Rappuoli R."/>
            <person name="Moxon E.R."/>
            <person name="Masignani V."/>
        </authorList>
    </citation>
    <scope>NUCLEOTIDE SEQUENCE [LARGE SCALE GENOMIC DNA]</scope>
    <source>
        <strain>Taiwan19F-14</strain>
    </source>
</reference>
<gene>
    <name evidence="1" type="primary">rplI</name>
    <name type="ordered locus">SPT_2222</name>
</gene>
<keyword id="KW-0687">Ribonucleoprotein</keyword>
<keyword id="KW-0689">Ribosomal protein</keyword>
<keyword id="KW-0694">RNA-binding</keyword>
<keyword id="KW-0699">rRNA-binding</keyword>
<protein>
    <recommendedName>
        <fullName evidence="1">Large ribosomal subunit protein bL9</fullName>
    </recommendedName>
    <alternativeName>
        <fullName evidence="2">50S ribosomal protein L9</fullName>
    </alternativeName>
</protein>
<sequence length="150" mass="16523">MKVIFLADVKGKGKKGEIKEVPTGYAQNFLIKKNLAKEATAQAVGELRGKQKSEEKAHAEMIAEGKAIKAQLEAEETVVEFVEKVGPDGRTFGSITNKKIAEELQKQFGIKIDKRHIQVQAPIRAVGLIDVPVKIYQDITSVINLRVKEG</sequence>
<dbReference type="EMBL" id="CP000921">
    <property type="protein sequence ID" value="ACO23618.1"/>
    <property type="molecule type" value="Genomic_DNA"/>
</dbReference>
<dbReference type="RefSeq" id="WP_000864220.1">
    <property type="nucleotide sequence ID" value="NC_012469.1"/>
</dbReference>
<dbReference type="SMR" id="C1CUC1"/>
<dbReference type="GeneID" id="45652575"/>
<dbReference type="KEGG" id="snt:SPT_2222"/>
<dbReference type="HOGENOM" id="CLU_078938_3_2_9"/>
<dbReference type="GO" id="GO:1990904">
    <property type="term" value="C:ribonucleoprotein complex"/>
    <property type="evidence" value="ECO:0007669"/>
    <property type="project" value="UniProtKB-KW"/>
</dbReference>
<dbReference type="GO" id="GO:0005840">
    <property type="term" value="C:ribosome"/>
    <property type="evidence" value="ECO:0007669"/>
    <property type="project" value="UniProtKB-KW"/>
</dbReference>
<dbReference type="GO" id="GO:0019843">
    <property type="term" value="F:rRNA binding"/>
    <property type="evidence" value="ECO:0007669"/>
    <property type="project" value="UniProtKB-UniRule"/>
</dbReference>
<dbReference type="GO" id="GO:0003735">
    <property type="term" value="F:structural constituent of ribosome"/>
    <property type="evidence" value="ECO:0007669"/>
    <property type="project" value="InterPro"/>
</dbReference>
<dbReference type="GO" id="GO:0006412">
    <property type="term" value="P:translation"/>
    <property type="evidence" value="ECO:0007669"/>
    <property type="project" value="UniProtKB-UniRule"/>
</dbReference>
<dbReference type="FunFam" id="3.10.430.100:FF:000009">
    <property type="entry name" value="50S ribosomal protein L9"/>
    <property type="match status" value="1"/>
</dbReference>
<dbReference type="FunFam" id="3.40.5.10:FF:000002">
    <property type="entry name" value="50S ribosomal protein L9"/>
    <property type="match status" value="1"/>
</dbReference>
<dbReference type="Gene3D" id="3.10.430.100">
    <property type="entry name" value="Ribosomal protein L9, C-terminal domain"/>
    <property type="match status" value="1"/>
</dbReference>
<dbReference type="Gene3D" id="3.40.5.10">
    <property type="entry name" value="Ribosomal protein L9, N-terminal domain"/>
    <property type="match status" value="1"/>
</dbReference>
<dbReference type="HAMAP" id="MF_00503">
    <property type="entry name" value="Ribosomal_bL9"/>
    <property type="match status" value="1"/>
</dbReference>
<dbReference type="InterPro" id="IPR000244">
    <property type="entry name" value="Ribosomal_bL9"/>
</dbReference>
<dbReference type="InterPro" id="IPR009027">
    <property type="entry name" value="Ribosomal_bL9/RNase_H1_N"/>
</dbReference>
<dbReference type="InterPro" id="IPR020594">
    <property type="entry name" value="Ribosomal_bL9_bac/chp"/>
</dbReference>
<dbReference type="InterPro" id="IPR020069">
    <property type="entry name" value="Ribosomal_bL9_C"/>
</dbReference>
<dbReference type="InterPro" id="IPR036791">
    <property type="entry name" value="Ribosomal_bL9_C_sf"/>
</dbReference>
<dbReference type="InterPro" id="IPR020070">
    <property type="entry name" value="Ribosomal_bL9_N"/>
</dbReference>
<dbReference type="InterPro" id="IPR036935">
    <property type="entry name" value="Ribosomal_bL9_N_sf"/>
</dbReference>
<dbReference type="NCBIfam" id="TIGR00158">
    <property type="entry name" value="L9"/>
    <property type="match status" value="1"/>
</dbReference>
<dbReference type="PANTHER" id="PTHR21368">
    <property type="entry name" value="50S RIBOSOMAL PROTEIN L9"/>
    <property type="match status" value="1"/>
</dbReference>
<dbReference type="Pfam" id="PF03948">
    <property type="entry name" value="Ribosomal_L9_C"/>
    <property type="match status" value="1"/>
</dbReference>
<dbReference type="Pfam" id="PF01281">
    <property type="entry name" value="Ribosomal_L9_N"/>
    <property type="match status" value="1"/>
</dbReference>
<dbReference type="SUPFAM" id="SSF55658">
    <property type="entry name" value="L9 N-domain-like"/>
    <property type="match status" value="1"/>
</dbReference>
<dbReference type="SUPFAM" id="SSF55653">
    <property type="entry name" value="Ribosomal protein L9 C-domain"/>
    <property type="match status" value="1"/>
</dbReference>
<dbReference type="PROSITE" id="PS00651">
    <property type="entry name" value="RIBOSOMAL_L9"/>
    <property type="match status" value="1"/>
</dbReference>
<organism>
    <name type="scientific">Streptococcus pneumoniae (strain Taiwan19F-14)</name>
    <dbReference type="NCBI Taxonomy" id="487213"/>
    <lineage>
        <taxon>Bacteria</taxon>
        <taxon>Bacillati</taxon>
        <taxon>Bacillota</taxon>
        <taxon>Bacilli</taxon>
        <taxon>Lactobacillales</taxon>
        <taxon>Streptococcaceae</taxon>
        <taxon>Streptococcus</taxon>
    </lineage>
</organism>